<proteinExistence type="inferred from homology"/>
<accession>A1S0T1</accession>
<feature type="chain" id="PRO_0000340998" description="Uncharacterized DapA-like lyase Tpen_1666">
    <location>
        <begin position="1"/>
        <end position="301"/>
    </location>
</feature>
<feature type="active site" description="Charge relay system" evidence="1">
    <location>
        <position position="47"/>
    </location>
</feature>
<feature type="active site" description="Proton donor" evidence="1">
    <location>
        <position position="136"/>
    </location>
</feature>
<feature type="active site" description="Schiff-base intermediate with substrate" evidence="1">
    <location>
        <position position="165"/>
    </location>
</feature>
<evidence type="ECO:0000250" key="1"/>
<evidence type="ECO:0000305" key="2"/>
<dbReference type="EC" id="4.-.-.-"/>
<dbReference type="EMBL" id="CP000505">
    <property type="protein sequence ID" value="ABL79061.1"/>
    <property type="molecule type" value="Genomic_DNA"/>
</dbReference>
<dbReference type="RefSeq" id="WP_011753326.1">
    <property type="nucleotide sequence ID" value="NC_008698.1"/>
</dbReference>
<dbReference type="SMR" id="A1S0T1"/>
<dbReference type="STRING" id="368408.Tpen_1666"/>
<dbReference type="EnsemblBacteria" id="ABL79061">
    <property type="protein sequence ID" value="ABL79061"/>
    <property type="gene ID" value="Tpen_1666"/>
</dbReference>
<dbReference type="GeneID" id="4601248"/>
<dbReference type="KEGG" id="tpe:Tpen_1666"/>
<dbReference type="eggNOG" id="arCOG04172">
    <property type="taxonomic scope" value="Archaea"/>
</dbReference>
<dbReference type="HOGENOM" id="CLU_049343_5_1_2"/>
<dbReference type="OrthoDB" id="33636at2157"/>
<dbReference type="Proteomes" id="UP000000641">
    <property type="component" value="Chromosome"/>
</dbReference>
<dbReference type="GO" id="GO:0005737">
    <property type="term" value="C:cytoplasm"/>
    <property type="evidence" value="ECO:0007669"/>
    <property type="project" value="UniProtKB-SubCell"/>
</dbReference>
<dbReference type="GO" id="GO:0008675">
    <property type="term" value="F:2-dehydro-3-deoxy-phosphogluconate aldolase activity"/>
    <property type="evidence" value="ECO:0007669"/>
    <property type="project" value="UniProtKB-ARBA"/>
</dbReference>
<dbReference type="GO" id="GO:0008840">
    <property type="term" value="F:4-hydroxy-tetrahydrodipicolinate synthase activity"/>
    <property type="evidence" value="ECO:0007669"/>
    <property type="project" value="TreeGrafter"/>
</dbReference>
<dbReference type="CDD" id="cd00408">
    <property type="entry name" value="DHDPS-like"/>
    <property type="match status" value="1"/>
</dbReference>
<dbReference type="Gene3D" id="3.20.20.70">
    <property type="entry name" value="Aldolase class I"/>
    <property type="match status" value="1"/>
</dbReference>
<dbReference type="InterPro" id="IPR013785">
    <property type="entry name" value="Aldolase_TIM"/>
</dbReference>
<dbReference type="InterPro" id="IPR002220">
    <property type="entry name" value="DapA-like"/>
</dbReference>
<dbReference type="PANTHER" id="PTHR12128:SF66">
    <property type="entry name" value="4-HYDROXY-2-OXOGLUTARATE ALDOLASE, MITOCHONDRIAL"/>
    <property type="match status" value="1"/>
</dbReference>
<dbReference type="PANTHER" id="PTHR12128">
    <property type="entry name" value="DIHYDRODIPICOLINATE SYNTHASE"/>
    <property type="match status" value="1"/>
</dbReference>
<dbReference type="Pfam" id="PF00701">
    <property type="entry name" value="DHDPS"/>
    <property type="match status" value="1"/>
</dbReference>
<dbReference type="PIRSF" id="PIRSF001365">
    <property type="entry name" value="DHDPS"/>
    <property type="match status" value="1"/>
</dbReference>
<dbReference type="PRINTS" id="PR00146">
    <property type="entry name" value="DHPICSNTHASE"/>
</dbReference>
<dbReference type="SMART" id="SM01130">
    <property type="entry name" value="DHDPS"/>
    <property type="match status" value="1"/>
</dbReference>
<dbReference type="SUPFAM" id="SSF51569">
    <property type="entry name" value="Aldolase"/>
    <property type="match status" value="1"/>
</dbReference>
<reference key="1">
    <citation type="journal article" date="2008" name="J. Bacteriol.">
        <title>Genome sequence of Thermofilum pendens reveals an exceptional loss of biosynthetic pathways without genome reduction.</title>
        <authorList>
            <person name="Anderson I."/>
            <person name="Rodriguez J."/>
            <person name="Susanti D."/>
            <person name="Porat I."/>
            <person name="Reich C."/>
            <person name="Ulrich L.E."/>
            <person name="Elkins J.G."/>
            <person name="Mavromatis K."/>
            <person name="Lykidis A."/>
            <person name="Kim E."/>
            <person name="Thompson L.S."/>
            <person name="Nolan M."/>
            <person name="Land M."/>
            <person name="Copeland A."/>
            <person name="Lapidus A."/>
            <person name="Lucas S."/>
            <person name="Detter C."/>
            <person name="Zhulin I.B."/>
            <person name="Olsen G.J."/>
            <person name="Whitman W."/>
            <person name="Mukhopadhyay B."/>
            <person name="Bristow J."/>
            <person name="Kyrpides N."/>
        </authorList>
    </citation>
    <scope>NUCLEOTIDE SEQUENCE [LARGE SCALE GENOMIC DNA]</scope>
    <source>
        <strain>DSM 2475 / Hrk 5</strain>
    </source>
</reference>
<keyword id="KW-0963">Cytoplasm</keyword>
<keyword id="KW-0456">Lyase</keyword>
<keyword id="KW-1185">Reference proteome</keyword>
<keyword id="KW-0704">Schiff base</keyword>
<name>DAPAL_THEPD</name>
<comment type="subunit">
    <text evidence="1">Homotetramer.</text>
</comment>
<comment type="subcellular location">
    <subcellularLocation>
        <location evidence="2">Cytoplasm</location>
    </subcellularLocation>
</comment>
<comment type="similarity">
    <text evidence="2">Belongs to the DapA family.</text>
</comment>
<gene>
    <name type="primary">dapAL</name>
    <name type="ordered locus">Tpen_1666</name>
</gene>
<organism>
    <name type="scientific">Thermofilum pendens (strain DSM 2475 / Hrk 5)</name>
    <dbReference type="NCBI Taxonomy" id="368408"/>
    <lineage>
        <taxon>Archaea</taxon>
        <taxon>Thermoproteota</taxon>
        <taxon>Thermoprotei</taxon>
        <taxon>Thermofilales</taxon>
        <taxon>Thermofilaceae</taxon>
        <taxon>Thermofilum</taxon>
    </lineage>
</organism>
<protein>
    <recommendedName>
        <fullName>Uncharacterized DapA-like lyase Tpen_1666</fullName>
        <ecNumber>4.-.-.-</ecNumber>
    </recommendedName>
</protein>
<sequence length="301" mass="33347">MSARFYGVISPFITPFREDLSLDREAVAWLARYQAEKGVHGIFPNSTTGEFVHLSREEAVEVTRLVLEAVGGKVWVIPGISANYTEDSVALGRTFKDLGVDGAVVTPPYFFKVSPERLKVHFSTILEKVDLPIIVYNIPATTGINIPVGLYLELAKEHSNLAGAKATVESFTYFRQLVQVVKAERKDFAVLTGLDDLLLPVLMMGGDGGIMALANAAPQIHREVYDAYRSGDLKRALEAWHKLLRLVRVYDYATSFPTSVKTLLKVMGAPVKPYARTPLTPETREVEEKIAQIARELGLKI</sequence>